<dbReference type="EC" id="7.6.2.11" evidence="1"/>
<dbReference type="EMBL" id="CP000425">
    <property type="protein sequence ID" value="ABJ72812.1"/>
    <property type="molecule type" value="Genomic_DNA"/>
</dbReference>
<dbReference type="RefSeq" id="WP_011676283.1">
    <property type="nucleotide sequence ID" value="NC_008527.1"/>
</dbReference>
<dbReference type="SMR" id="Q02Z10"/>
<dbReference type="KEGG" id="llc:LACR_1284"/>
<dbReference type="HOGENOM" id="CLU_000604_1_1_9"/>
<dbReference type="Proteomes" id="UP000000240">
    <property type="component" value="Chromosome"/>
</dbReference>
<dbReference type="GO" id="GO:0043190">
    <property type="term" value="C:ATP-binding cassette (ABC) transporter complex"/>
    <property type="evidence" value="ECO:0007669"/>
    <property type="project" value="InterPro"/>
</dbReference>
<dbReference type="GO" id="GO:0015417">
    <property type="term" value="F:ABC-type polyamine transporter activity"/>
    <property type="evidence" value="ECO:0007669"/>
    <property type="project" value="UniProtKB-EC"/>
</dbReference>
<dbReference type="GO" id="GO:0005524">
    <property type="term" value="F:ATP binding"/>
    <property type="evidence" value="ECO:0007669"/>
    <property type="project" value="UniProtKB-KW"/>
</dbReference>
<dbReference type="GO" id="GO:0016887">
    <property type="term" value="F:ATP hydrolysis activity"/>
    <property type="evidence" value="ECO:0007669"/>
    <property type="project" value="InterPro"/>
</dbReference>
<dbReference type="FunFam" id="3.40.50.300:FF:000042">
    <property type="entry name" value="Maltose/maltodextrin ABC transporter, ATP-binding protein"/>
    <property type="match status" value="1"/>
</dbReference>
<dbReference type="Gene3D" id="2.40.50.100">
    <property type="match status" value="1"/>
</dbReference>
<dbReference type="Gene3D" id="3.40.50.300">
    <property type="entry name" value="P-loop containing nucleotide triphosphate hydrolases"/>
    <property type="match status" value="1"/>
</dbReference>
<dbReference type="InterPro" id="IPR003593">
    <property type="entry name" value="AAA+_ATPase"/>
</dbReference>
<dbReference type="InterPro" id="IPR050093">
    <property type="entry name" value="ABC_SmlMolc_Importer"/>
</dbReference>
<dbReference type="InterPro" id="IPR003439">
    <property type="entry name" value="ABC_transporter-like_ATP-bd"/>
</dbReference>
<dbReference type="InterPro" id="IPR017871">
    <property type="entry name" value="ABC_transporter-like_CS"/>
</dbReference>
<dbReference type="InterPro" id="IPR008995">
    <property type="entry name" value="Mo/tungstate-bd_C_term_dom"/>
</dbReference>
<dbReference type="InterPro" id="IPR027417">
    <property type="entry name" value="P-loop_NTPase"/>
</dbReference>
<dbReference type="InterPro" id="IPR013611">
    <property type="entry name" value="Transp-assoc_OB_typ2"/>
</dbReference>
<dbReference type="PANTHER" id="PTHR42781">
    <property type="entry name" value="SPERMIDINE/PUTRESCINE IMPORT ATP-BINDING PROTEIN POTA"/>
    <property type="match status" value="1"/>
</dbReference>
<dbReference type="PANTHER" id="PTHR42781:SF4">
    <property type="entry name" value="SPERMIDINE_PUTRESCINE IMPORT ATP-BINDING PROTEIN POTA"/>
    <property type="match status" value="1"/>
</dbReference>
<dbReference type="Pfam" id="PF00005">
    <property type="entry name" value="ABC_tran"/>
    <property type="match status" value="1"/>
</dbReference>
<dbReference type="Pfam" id="PF08402">
    <property type="entry name" value="TOBE_2"/>
    <property type="match status" value="1"/>
</dbReference>
<dbReference type="SMART" id="SM00382">
    <property type="entry name" value="AAA"/>
    <property type="match status" value="1"/>
</dbReference>
<dbReference type="SUPFAM" id="SSF50331">
    <property type="entry name" value="MOP-like"/>
    <property type="match status" value="1"/>
</dbReference>
<dbReference type="SUPFAM" id="SSF52540">
    <property type="entry name" value="P-loop containing nucleoside triphosphate hydrolases"/>
    <property type="match status" value="1"/>
</dbReference>
<dbReference type="PROSITE" id="PS00211">
    <property type="entry name" value="ABC_TRANSPORTER_1"/>
    <property type="match status" value="1"/>
</dbReference>
<dbReference type="PROSITE" id="PS50893">
    <property type="entry name" value="ABC_TRANSPORTER_2"/>
    <property type="match status" value="1"/>
</dbReference>
<dbReference type="PROSITE" id="PS51305">
    <property type="entry name" value="POTA"/>
    <property type="match status" value="1"/>
</dbReference>
<protein>
    <recommendedName>
        <fullName evidence="1">Spermidine/putrescine import ATP-binding protein PotA</fullName>
        <ecNumber evidence="1">7.6.2.11</ecNumber>
    </recommendedName>
</protein>
<organism>
    <name type="scientific">Lactococcus lactis subsp. cremoris (strain SK11)</name>
    <dbReference type="NCBI Taxonomy" id="272622"/>
    <lineage>
        <taxon>Bacteria</taxon>
        <taxon>Bacillati</taxon>
        <taxon>Bacillota</taxon>
        <taxon>Bacilli</taxon>
        <taxon>Lactobacillales</taxon>
        <taxon>Streptococcaceae</taxon>
        <taxon>Lactococcus</taxon>
        <taxon>Lactococcus cremoris subsp. cremoris</taxon>
    </lineage>
</organism>
<evidence type="ECO:0000255" key="1">
    <source>
        <dbReference type="HAMAP-Rule" id="MF_01726"/>
    </source>
</evidence>
<reference key="1">
    <citation type="journal article" date="2006" name="Proc. Natl. Acad. Sci. U.S.A.">
        <title>Comparative genomics of the lactic acid bacteria.</title>
        <authorList>
            <person name="Makarova K.S."/>
            <person name="Slesarev A."/>
            <person name="Wolf Y.I."/>
            <person name="Sorokin A."/>
            <person name="Mirkin B."/>
            <person name="Koonin E.V."/>
            <person name="Pavlov A."/>
            <person name="Pavlova N."/>
            <person name="Karamychev V."/>
            <person name="Polouchine N."/>
            <person name="Shakhova V."/>
            <person name="Grigoriev I."/>
            <person name="Lou Y."/>
            <person name="Rohksar D."/>
            <person name="Lucas S."/>
            <person name="Huang K."/>
            <person name="Goodstein D.M."/>
            <person name="Hawkins T."/>
            <person name="Plengvidhya V."/>
            <person name="Welker D."/>
            <person name="Hughes J."/>
            <person name="Goh Y."/>
            <person name="Benson A."/>
            <person name="Baldwin K."/>
            <person name="Lee J.-H."/>
            <person name="Diaz-Muniz I."/>
            <person name="Dosti B."/>
            <person name="Smeianov V."/>
            <person name="Wechter W."/>
            <person name="Barabote R."/>
            <person name="Lorca G."/>
            <person name="Altermann E."/>
            <person name="Barrangou R."/>
            <person name="Ganesan B."/>
            <person name="Xie Y."/>
            <person name="Rawsthorne H."/>
            <person name="Tamir D."/>
            <person name="Parker C."/>
            <person name="Breidt F."/>
            <person name="Broadbent J.R."/>
            <person name="Hutkins R."/>
            <person name="O'Sullivan D."/>
            <person name="Steele J."/>
            <person name="Unlu G."/>
            <person name="Saier M.H. Jr."/>
            <person name="Klaenhammer T."/>
            <person name="Richardson P."/>
            <person name="Kozyavkin S."/>
            <person name="Weimer B.C."/>
            <person name="Mills D.A."/>
        </authorList>
    </citation>
    <scope>NUCLEOTIDE SEQUENCE [LARGE SCALE GENOMIC DNA]</scope>
    <source>
        <strain>SK11</strain>
    </source>
</reference>
<name>POTA_LACLS</name>
<feature type="chain" id="PRO_0000286236" description="Spermidine/putrescine import ATP-binding protein PotA">
    <location>
        <begin position="1"/>
        <end position="426"/>
    </location>
</feature>
<feature type="domain" description="ABC transporter" evidence="1">
    <location>
        <begin position="6"/>
        <end position="238"/>
    </location>
</feature>
<feature type="binding site" evidence="1">
    <location>
        <begin position="40"/>
        <end position="47"/>
    </location>
    <ligand>
        <name>ATP</name>
        <dbReference type="ChEBI" id="CHEBI:30616"/>
    </ligand>
</feature>
<proteinExistence type="inferred from homology"/>
<gene>
    <name evidence="1" type="primary">potA</name>
    <name type="ordered locus">LACR_1284</name>
</gene>
<comment type="function">
    <text evidence="1">Part of the ABC transporter complex PotABCD involved in spermidine/putrescine import. Responsible for energy coupling to the transport system.</text>
</comment>
<comment type="catalytic activity">
    <reaction evidence="1">
        <text>ATP + H2O + polyamine-[polyamine-binding protein]Side 1 = ADP + phosphate + polyamineSide 2 + [polyamine-binding protein]Side 1.</text>
        <dbReference type="EC" id="7.6.2.11"/>
    </reaction>
</comment>
<comment type="subunit">
    <text evidence="1">The complex is composed of two ATP-binding proteins (PotA), two transmembrane proteins (PotB and PotC) and a solute-binding protein (PotD).</text>
</comment>
<comment type="subcellular location">
    <subcellularLocation>
        <location evidence="1">Cell membrane</location>
        <topology evidence="1">Peripheral membrane protein</topology>
    </subcellularLocation>
</comment>
<comment type="similarity">
    <text evidence="1">Belongs to the ABC transporter superfamily. Spermidine/putrescine importer (TC 3.A.1.11.1) family.</text>
</comment>
<sequence length="426" mass="48271">MSKTIIEFKNVSKTYADTDTTVLKDISFELEEGKFYTLLGASGSGKSTILNIIAGLLDATDGDVILDDKRINDLPANKRNVHTIFQSYALFPNMNVFDNVAFALKIKGVDKKEIAKRVSESLKLVRLDGFEKRSITKLSGGQKQRVAIARAIIDRPKVLLLDESLSALDMKLRKDMQYELRELQQSLGITFIFVTHDQEEALAMSDWVFIMNEGEIVQSGTPTDIYDEPINHFVADFIGESNILNGKMIEDYLVEFNGQKFEAVDGGMRKNEPIEVVIRPEDIWFTLPNEGKFNVKVDTQLFRGVHYEIVAYDEFNNEWIIHSTHKAIVGETVGLDFDPEAIHIMRLNESEEEFDARIEEYVEEEETVGLAKAVEEENAEEEAAIQEAVKEALENTMELTELAETVNEILQKQENETENSESGDHK</sequence>
<accession>Q02Z10</accession>
<keyword id="KW-0067">ATP-binding</keyword>
<keyword id="KW-1003">Cell membrane</keyword>
<keyword id="KW-0472">Membrane</keyword>
<keyword id="KW-0547">Nucleotide-binding</keyword>
<keyword id="KW-1278">Translocase</keyword>
<keyword id="KW-0813">Transport</keyword>